<comment type="function">
    <text evidence="1">Involved in DNA repair and RecF pathway recombination.</text>
</comment>
<comment type="similarity">
    <text evidence="1">Belongs to the RecO family.</text>
</comment>
<proteinExistence type="inferred from homology"/>
<feature type="chain" id="PRO_1000204102" description="DNA repair protein RecO">
    <location>
        <begin position="1"/>
        <end position="249"/>
    </location>
</feature>
<gene>
    <name evidence="1" type="primary">recO</name>
    <name type="ordered locus">DMR_20820</name>
</gene>
<dbReference type="EMBL" id="AP010904">
    <property type="protein sequence ID" value="BAH75574.1"/>
    <property type="molecule type" value="Genomic_DNA"/>
</dbReference>
<dbReference type="RefSeq" id="WP_015860760.1">
    <property type="nucleotide sequence ID" value="NC_012796.1"/>
</dbReference>
<dbReference type="SMR" id="C4XS52"/>
<dbReference type="STRING" id="573370.DMR_20820"/>
<dbReference type="KEGG" id="dma:DMR_20820"/>
<dbReference type="eggNOG" id="COG1381">
    <property type="taxonomic scope" value="Bacteria"/>
</dbReference>
<dbReference type="HOGENOM" id="CLU_066632_2_1_7"/>
<dbReference type="OrthoDB" id="9780797at2"/>
<dbReference type="Proteomes" id="UP000009071">
    <property type="component" value="Chromosome"/>
</dbReference>
<dbReference type="GO" id="GO:0043590">
    <property type="term" value="C:bacterial nucleoid"/>
    <property type="evidence" value="ECO:0007669"/>
    <property type="project" value="TreeGrafter"/>
</dbReference>
<dbReference type="GO" id="GO:0006310">
    <property type="term" value="P:DNA recombination"/>
    <property type="evidence" value="ECO:0007669"/>
    <property type="project" value="UniProtKB-UniRule"/>
</dbReference>
<dbReference type="GO" id="GO:0006302">
    <property type="term" value="P:double-strand break repair"/>
    <property type="evidence" value="ECO:0007669"/>
    <property type="project" value="TreeGrafter"/>
</dbReference>
<dbReference type="Gene3D" id="2.40.50.140">
    <property type="entry name" value="Nucleic acid-binding proteins"/>
    <property type="match status" value="1"/>
</dbReference>
<dbReference type="Gene3D" id="1.20.1440.120">
    <property type="entry name" value="Recombination protein O, C-terminal domain"/>
    <property type="match status" value="1"/>
</dbReference>
<dbReference type="HAMAP" id="MF_00201">
    <property type="entry name" value="RecO"/>
    <property type="match status" value="1"/>
</dbReference>
<dbReference type="InterPro" id="IPR037278">
    <property type="entry name" value="ARFGAP/RecO"/>
</dbReference>
<dbReference type="InterPro" id="IPR022572">
    <property type="entry name" value="DNA_rep/recomb_RecO_N"/>
</dbReference>
<dbReference type="InterPro" id="IPR012340">
    <property type="entry name" value="NA-bd_OB-fold"/>
</dbReference>
<dbReference type="InterPro" id="IPR003717">
    <property type="entry name" value="RecO"/>
</dbReference>
<dbReference type="InterPro" id="IPR042242">
    <property type="entry name" value="RecO_C"/>
</dbReference>
<dbReference type="PANTHER" id="PTHR33991">
    <property type="entry name" value="DNA REPAIR PROTEIN RECO"/>
    <property type="match status" value="1"/>
</dbReference>
<dbReference type="PANTHER" id="PTHR33991:SF1">
    <property type="entry name" value="DNA REPAIR PROTEIN RECO"/>
    <property type="match status" value="1"/>
</dbReference>
<dbReference type="Pfam" id="PF02565">
    <property type="entry name" value="RecO_C"/>
    <property type="match status" value="1"/>
</dbReference>
<dbReference type="Pfam" id="PF11967">
    <property type="entry name" value="RecO_N"/>
    <property type="match status" value="1"/>
</dbReference>
<dbReference type="SUPFAM" id="SSF57863">
    <property type="entry name" value="ArfGap/RecO-like zinc finger"/>
    <property type="match status" value="1"/>
</dbReference>
<dbReference type="SUPFAM" id="SSF50249">
    <property type="entry name" value="Nucleic acid-binding proteins"/>
    <property type="match status" value="1"/>
</dbReference>
<reference key="1">
    <citation type="journal article" date="2009" name="Genome Res.">
        <title>Whole genome sequence of Desulfovibrio magneticus strain RS-1 revealed common gene clusters in magnetotactic bacteria.</title>
        <authorList>
            <person name="Nakazawa H."/>
            <person name="Arakaki A."/>
            <person name="Narita-Yamada S."/>
            <person name="Yashiro I."/>
            <person name="Jinno K."/>
            <person name="Aoki N."/>
            <person name="Tsuruyama A."/>
            <person name="Okamura Y."/>
            <person name="Tanikawa S."/>
            <person name="Fujita N."/>
            <person name="Takeyama H."/>
            <person name="Matsunaga T."/>
        </authorList>
    </citation>
    <scope>NUCLEOTIDE SEQUENCE [LARGE SCALE GENOMIC DNA]</scope>
    <source>
        <strain>ATCC 700980 / DSM 13731 / RS-1</strain>
    </source>
</reference>
<organism>
    <name type="scientific">Solidesulfovibrio magneticus (strain ATCC 700980 / DSM 13731 / RS-1)</name>
    <name type="common">Desulfovibrio magneticus</name>
    <dbReference type="NCBI Taxonomy" id="573370"/>
    <lineage>
        <taxon>Bacteria</taxon>
        <taxon>Pseudomonadati</taxon>
        <taxon>Thermodesulfobacteriota</taxon>
        <taxon>Desulfovibrionia</taxon>
        <taxon>Desulfovibrionales</taxon>
        <taxon>Desulfovibrionaceae</taxon>
        <taxon>Solidesulfovibrio</taxon>
    </lineage>
</organism>
<name>RECO_SOLM1</name>
<sequence length="249" mass="27148">MEYSDQALILAVKRFREIDAWVRLLSPTRGVYTAFAFGGLKSRRRFLGCLDPLNHVQFKVRRSGYRGYHCLAEGKLLDAPRQLRSHPQRLGMAVNCLKFFEAAPVAPGSFAQAYGLMRAMLSTLDAADEPSPLFPLLFRARMTFLHGMLPACGQCAVCGQPLGHDGAVCHVEEGRVACPDCRAAASGGVHARLGGEALALLASAVEQGPEQWAACRPHPAAGREFSRAVDLLVRYHMGLAWEQGGFVRA</sequence>
<keyword id="KW-0227">DNA damage</keyword>
<keyword id="KW-0233">DNA recombination</keyword>
<keyword id="KW-0234">DNA repair</keyword>
<accession>C4XS52</accession>
<protein>
    <recommendedName>
        <fullName evidence="1">DNA repair protein RecO</fullName>
    </recommendedName>
    <alternativeName>
        <fullName evidence="1">Recombination protein O</fullName>
    </alternativeName>
</protein>
<evidence type="ECO:0000255" key="1">
    <source>
        <dbReference type="HAMAP-Rule" id="MF_00201"/>
    </source>
</evidence>